<proteinExistence type="inferred from homology"/>
<gene>
    <name evidence="1" type="primary">smpB</name>
    <name type="ordered locus">SEN2608</name>
</gene>
<keyword id="KW-0963">Cytoplasm</keyword>
<keyword id="KW-0694">RNA-binding</keyword>
<accession>B5QUH5</accession>
<sequence>MTKKKAHKPGSATIALNKRARHEYFIEEEFEAGLALQGWEVKSLRAGKANIGDSYVILKDGEAWLFGANFTPMAVASTHVVCDPTRTRKLLLNQRELDSLYGRINREGYTVVALSLYWKNAWCKVKIGVAKGKKQHDKRSDLKEREWQLDKARIMKNAGR</sequence>
<reference key="1">
    <citation type="journal article" date="2008" name="Genome Res.">
        <title>Comparative genome analysis of Salmonella enteritidis PT4 and Salmonella gallinarum 287/91 provides insights into evolutionary and host adaptation pathways.</title>
        <authorList>
            <person name="Thomson N.R."/>
            <person name="Clayton D.J."/>
            <person name="Windhorst D."/>
            <person name="Vernikos G."/>
            <person name="Davidson S."/>
            <person name="Churcher C."/>
            <person name="Quail M.A."/>
            <person name="Stevens M."/>
            <person name="Jones M.A."/>
            <person name="Watson M."/>
            <person name="Barron A."/>
            <person name="Layton A."/>
            <person name="Pickard D."/>
            <person name="Kingsley R.A."/>
            <person name="Bignell A."/>
            <person name="Clark L."/>
            <person name="Harris B."/>
            <person name="Ormond D."/>
            <person name="Abdellah Z."/>
            <person name="Brooks K."/>
            <person name="Cherevach I."/>
            <person name="Chillingworth T."/>
            <person name="Woodward J."/>
            <person name="Norberczak H."/>
            <person name="Lord A."/>
            <person name="Arrowsmith C."/>
            <person name="Jagels K."/>
            <person name="Moule S."/>
            <person name="Mungall K."/>
            <person name="Saunders M."/>
            <person name="Whitehead S."/>
            <person name="Chabalgoity J.A."/>
            <person name="Maskell D."/>
            <person name="Humphreys T."/>
            <person name="Roberts M."/>
            <person name="Barrow P.A."/>
            <person name="Dougan G."/>
            <person name="Parkhill J."/>
        </authorList>
    </citation>
    <scope>NUCLEOTIDE SEQUENCE [LARGE SCALE GENOMIC DNA]</scope>
    <source>
        <strain>P125109</strain>
    </source>
</reference>
<feature type="chain" id="PRO_1000090180" description="SsrA-binding protein">
    <location>
        <begin position="1"/>
        <end position="160"/>
    </location>
</feature>
<name>SSRP_SALEP</name>
<protein>
    <recommendedName>
        <fullName evidence="1">SsrA-binding protein</fullName>
    </recommendedName>
    <alternativeName>
        <fullName evidence="1">Small protein B</fullName>
    </alternativeName>
</protein>
<dbReference type="EMBL" id="AM933172">
    <property type="protein sequence ID" value="CAR34190.1"/>
    <property type="molecule type" value="Genomic_DNA"/>
</dbReference>
<dbReference type="RefSeq" id="WP_001518569.1">
    <property type="nucleotide sequence ID" value="NC_011294.1"/>
</dbReference>
<dbReference type="SMR" id="B5QUH5"/>
<dbReference type="GeneID" id="66757102"/>
<dbReference type="KEGG" id="set:SEN2608"/>
<dbReference type="HOGENOM" id="CLU_108953_3_0_6"/>
<dbReference type="Proteomes" id="UP000000613">
    <property type="component" value="Chromosome"/>
</dbReference>
<dbReference type="GO" id="GO:0005829">
    <property type="term" value="C:cytosol"/>
    <property type="evidence" value="ECO:0007669"/>
    <property type="project" value="TreeGrafter"/>
</dbReference>
<dbReference type="GO" id="GO:0003723">
    <property type="term" value="F:RNA binding"/>
    <property type="evidence" value="ECO:0007669"/>
    <property type="project" value="UniProtKB-UniRule"/>
</dbReference>
<dbReference type="GO" id="GO:0070929">
    <property type="term" value="P:trans-translation"/>
    <property type="evidence" value="ECO:0007669"/>
    <property type="project" value="UniProtKB-UniRule"/>
</dbReference>
<dbReference type="CDD" id="cd09294">
    <property type="entry name" value="SmpB"/>
    <property type="match status" value="1"/>
</dbReference>
<dbReference type="FunFam" id="2.40.280.10:FF:000001">
    <property type="entry name" value="SsrA-binding protein"/>
    <property type="match status" value="1"/>
</dbReference>
<dbReference type="Gene3D" id="2.40.280.10">
    <property type="match status" value="1"/>
</dbReference>
<dbReference type="HAMAP" id="MF_00023">
    <property type="entry name" value="SmpB"/>
    <property type="match status" value="1"/>
</dbReference>
<dbReference type="InterPro" id="IPR023620">
    <property type="entry name" value="SmpB"/>
</dbReference>
<dbReference type="InterPro" id="IPR000037">
    <property type="entry name" value="SsrA-bd_prot"/>
</dbReference>
<dbReference type="InterPro" id="IPR020081">
    <property type="entry name" value="SsrA-bd_prot_CS"/>
</dbReference>
<dbReference type="NCBIfam" id="NF003843">
    <property type="entry name" value="PRK05422.1"/>
    <property type="match status" value="1"/>
</dbReference>
<dbReference type="NCBIfam" id="TIGR00086">
    <property type="entry name" value="smpB"/>
    <property type="match status" value="1"/>
</dbReference>
<dbReference type="PANTHER" id="PTHR30308:SF2">
    <property type="entry name" value="SSRA-BINDING PROTEIN"/>
    <property type="match status" value="1"/>
</dbReference>
<dbReference type="PANTHER" id="PTHR30308">
    <property type="entry name" value="TMRNA-BINDING COMPONENT OF TRANS-TRANSLATION TAGGING COMPLEX"/>
    <property type="match status" value="1"/>
</dbReference>
<dbReference type="Pfam" id="PF01668">
    <property type="entry name" value="SmpB"/>
    <property type="match status" value="1"/>
</dbReference>
<dbReference type="SUPFAM" id="SSF74982">
    <property type="entry name" value="Small protein B (SmpB)"/>
    <property type="match status" value="1"/>
</dbReference>
<dbReference type="PROSITE" id="PS01317">
    <property type="entry name" value="SSRP"/>
    <property type="match status" value="1"/>
</dbReference>
<comment type="function">
    <text evidence="1">Required for rescue of stalled ribosomes mediated by trans-translation. Binds to transfer-messenger RNA (tmRNA), required for stable association of tmRNA with ribosomes. tmRNA and SmpB together mimic tRNA shape, replacing the anticodon stem-loop with SmpB. tmRNA is encoded by the ssrA gene; the 2 termini fold to resemble tRNA(Ala) and it encodes a 'tag peptide', a short internal open reading frame. During trans-translation Ala-aminoacylated tmRNA acts like a tRNA, entering the A-site of stalled ribosomes, displacing the stalled mRNA. The ribosome then switches to translate the ORF on the tmRNA; the nascent peptide is terminated with the 'tag peptide' encoded by the tmRNA and targeted for degradation. The ribosome is freed to recommence translation, which seems to be the essential function of trans-translation.</text>
</comment>
<comment type="subcellular location">
    <subcellularLocation>
        <location evidence="1">Cytoplasm</location>
    </subcellularLocation>
    <text evidence="1">The tmRNA-SmpB complex associates with stalled 70S ribosomes.</text>
</comment>
<comment type="similarity">
    <text evidence="1">Belongs to the SmpB family.</text>
</comment>
<organism>
    <name type="scientific">Salmonella enteritidis PT4 (strain P125109)</name>
    <dbReference type="NCBI Taxonomy" id="550537"/>
    <lineage>
        <taxon>Bacteria</taxon>
        <taxon>Pseudomonadati</taxon>
        <taxon>Pseudomonadota</taxon>
        <taxon>Gammaproteobacteria</taxon>
        <taxon>Enterobacterales</taxon>
        <taxon>Enterobacteriaceae</taxon>
        <taxon>Salmonella</taxon>
    </lineage>
</organism>
<evidence type="ECO:0000255" key="1">
    <source>
        <dbReference type="HAMAP-Rule" id="MF_00023"/>
    </source>
</evidence>